<proteinExistence type="inferred from homology"/>
<gene>
    <name type="ordered locus">VSAL_I1091</name>
</gene>
<feature type="chain" id="PRO_1000138913" description="Deoxyguanosinetriphosphate triphosphohydrolase-like protein">
    <location>
        <begin position="1"/>
        <end position="448"/>
    </location>
</feature>
<feature type="domain" description="HD" evidence="2">
    <location>
        <begin position="67"/>
        <end position="260"/>
    </location>
</feature>
<sequence length="448" mass="51693">MNKTIDITLSPHWEDRISNEQKLRRNDQRSVFQRDRARILHSAAFRRLQAKTQVHGPGSANDFYRTRLTHSLEVSQIGTGIVAQLKLRQPEFRHLLTSTSLMESICLAHDIGHPPFGHGGEIALNYMMRNHGGFEGNGQTLRILSKLEPYTEHFGMNLARRTLMGVLKYPAFLDQVHSKYRPDDVTNLRHLKSIEWHPPKGIYRDDESILHWITAPLSEADKTLFSTFRFQKENDKVHKKTRFKSIDCSIMELADDIAYGIHDLEDAIVMGIVTRNQWQESVASKLAECGDEWFEAHINNIGDKLFSGLQYQRKDGIGGMVNALLTSITIQKSTFEEEQSFESELLKWNAYLSPSMSYALNILKKFVGQYVIHNSEMQRIEYKGQQIVMEIFDALNSDPERLLPENDKREWREAKESGTNHHRIIADYIAGMTDGYAQRLYNQLFVPI</sequence>
<comment type="similarity">
    <text evidence="1">Belongs to the dGTPase family. Type 2 subfamily.</text>
</comment>
<evidence type="ECO:0000255" key="1">
    <source>
        <dbReference type="HAMAP-Rule" id="MF_01212"/>
    </source>
</evidence>
<evidence type="ECO:0000255" key="2">
    <source>
        <dbReference type="PROSITE-ProRule" id="PRU01175"/>
    </source>
</evidence>
<protein>
    <recommendedName>
        <fullName evidence="1">Deoxyguanosinetriphosphate triphosphohydrolase-like protein</fullName>
    </recommendedName>
</protein>
<keyword id="KW-0378">Hydrolase</keyword>
<organism>
    <name type="scientific">Aliivibrio salmonicida (strain LFI1238)</name>
    <name type="common">Vibrio salmonicida (strain LFI1238)</name>
    <dbReference type="NCBI Taxonomy" id="316275"/>
    <lineage>
        <taxon>Bacteria</taxon>
        <taxon>Pseudomonadati</taxon>
        <taxon>Pseudomonadota</taxon>
        <taxon>Gammaproteobacteria</taxon>
        <taxon>Vibrionales</taxon>
        <taxon>Vibrionaceae</taxon>
        <taxon>Aliivibrio</taxon>
    </lineage>
</organism>
<dbReference type="EMBL" id="FM178379">
    <property type="protein sequence ID" value="CAQ78776.1"/>
    <property type="molecule type" value="Genomic_DNA"/>
</dbReference>
<dbReference type="RefSeq" id="WP_012549845.1">
    <property type="nucleotide sequence ID" value="NC_011312.1"/>
</dbReference>
<dbReference type="SMR" id="B6EJ48"/>
<dbReference type="KEGG" id="vsa:VSAL_I1091"/>
<dbReference type="eggNOG" id="COG0232">
    <property type="taxonomic scope" value="Bacteria"/>
</dbReference>
<dbReference type="HOGENOM" id="CLU_028163_0_0_6"/>
<dbReference type="Proteomes" id="UP000001730">
    <property type="component" value="Chromosome 1"/>
</dbReference>
<dbReference type="GO" id="GO:0008832">
    <property type="term" value="F:dGTPase activity"/>
    <property type="evidence" value="ECO:0007669"/>
    <property type="project" value="TreeGrafter"/>
</dbReference>
<dbReference type="GO" id="GO:0006203">
    <property type="term" value="P:dGTP catabolic process"/>
    <property type="evidence" value="ECO:0007669"/>
    <property type="project" value="TreeGrafter"/>
</dbReference>
<dbReference type="CDD" id="cd00077">
    <property type="entry name" value="HDc"/>
    <property type="match status" value="1"/>
</dbReference>
<dbReference type="Gene3D" id="1.10.3210.10">
    <property type="entry name" value="Hypothetical protein af1432"/>
    <property type="match status" value="1"/>
</dbReference>
<dbReference type="HAMAP" id="MF_01212">
    <property type="entry name" value="dGTPase_type2"/>
    <property type="match status" value="1"/>
</dbReference>
<dbReference type="InterPro" id="IPR006261">
    <property type="entry name" value="dGTPase"/>
</dbReference>
<dbReference type="InterPro" id="IPR050135">
    <property type="entry name" value="dGTPase-like"/>
</dbReference>
<dbReference type="InterPro" id="IPR023023">
    <property type="entry name" value="dNTPase_2"/>
</dbReference>
<dbReference type="InterPro" id="IPR003607">
    <property type="entry name" value="HD/PDEase_dom"/>
</dbReference>
<dbReference type="InterPro" id="IPR006674">
    <property type="entry name" value="HD_domain"/>
</dbReference>
<dbReference type="InterPro" id="IPR026875">
    <property type="entry name" value="PHydrolase_assoc_dom"/>
</dbReference>
<dbReference type="NCBIfam" id="NF041026">
    <property type="entry name" value="antiphage_dGTPase"/>
    <property type="match status" value="1"/>
</dbReference>
<dbReference type="NCBIfam" id="TIGR01353">
    <property type="entry name" value="dGTP_triPase"/>
    <property type="match status" value="1"/>
</dbReference>
<dbReference type="NCBIfam" id="NF003701">
    <property type="entry name" value="PRK05318.1"/>
    <property type="match status" value="1"/>
</dbReference>
<dbReference type="PANTHER" id="PTHR11373:SF40">
    <property type="entry name" value="DEOXYGUANOSINETRIPHOSPHATE TRIPHOSPHOHYDROLASE-LIKE PROTEIN 2"/>
    <property type="match status" value="1"/>
</dbReference>
<dbReference type="PANTHER" id="PTHR11373">
    <property type="entry name" value="DEOXYNUCLEOSIDE TRIPHOSPHATE TRIPHOSPHOHYDROLASE"/>
    <property type="match status" value="1"/>
</dbReference>
<dbReference type="Pfam" id="PF01966">
    <property type="entry name" value="HD"/>
    <property type="match status" value="1"/>
</dbReference>
<dbReference type="Pfam" id="PF13286">
    <property type="entry name" value="HD_assoc"/>
    <property type="match status" value="1"/>
</dbReference>
<dbReference type="SMART" id="SM00471">
    <property type="entry name" value="HDc"/>
    <property type="match status" value="1"/>
</dbReference>
<dbReference type="SUPFAM" id="SSF109604">
    <property type="entry name" value="HD-domain/PDEase-like"/>
    <property type="match status" value="1"/>
</dbReference>
<dbReference type="PROSITE" id="PS51831">
    <property type="entry name" value="HD"/>
    <property type="match status" value="1"/>
</dbReference>
<accession>B6EJ48</accession>
<name>DGTL1_ALISL</name>
<reference key="1">
    <citation type="journal article" date="2008" name="BMC Genomics">
        <title>The genome sequence of the fish pathogen Aliivibrio salmonicida strain LFI1238 shows extensive evidence of gene decay.</title>
        <authorList>
            <person name="Hjerde E."/>
            <person name="Lorentzen M.S."/>
            <person name="Holden M.T."/>
            <person name="Seeger K."/>
            <person name="Paulsen S."/>
            <person name="Bason N."/>
            <person name="Churcher C."/>
            <person name="Harris D."/>
            <person name="Norbertczak H."/>
            <person name="Quail M.A."/>
            <person name="Sanders S."/>
            <person name="Thurston S."/>
            <person name="Parkhill J."/>
            <person name="Willassen N.P."/>
            <person name="Thomson N.R."/>
        </authorList>
    </citation>
    <scope>NUCLEOTIDE SEQUENCE [LARGE SCALE GENOMIC DNA]</scope>
    <source>
        <strain>LFI1238</strain>
    </source>
</reference>